<keyword id="KW-0165">Cleavage on pair of basic residues</keyword>
<keyword id="KW-0903">Direct protein sequencing</keyword>
<keyword id="KW-1015">Disulfide bond</keyword>
<keyword id="KW-0372">Hormone</keyword>
<keyword id="KW-0964">Secreted</keyword>
<keyword id="KW-0732">Signal</keyword>
<organism>
    <name type="scientific">Pelophylax ridibundus</name>
    <name type="common">Marsh frog</name>
    <name type="synonym">Rana ridibunda</name>
    <dbReference type="NCBI Taxonomy" id="8406"/>
    <lineage>
        <taxon>Eukaryota</taxon>
        <taxon>Metazoa</taxon>
        <taxon>Chordata</taxon>
        <taxon>Craniata</taxon>
        <taxon>Vertebrata</taxon>
        <taxon>Euteleostomi</taxon>
        <taxon>Amphibia</taxon>
        <taxon>Batrachia</taxon>
        <taxon>Anura</taxon>
        <taxon>Neobatrachia</taxon>
        <taxon>Ranoidea</taxon>
        <taxon>Ranidae</taxon>
        <taxon>Pelophylax</taxon>
    </lineage>
</organism>
<evidence type="ECO:0000255" key="1"/>
<evidence type="ECO:0000305" key="2"/>
<reference key="1">
    <citation type="journal article" date="1998" name="Proc. Natl. Acad. Sci. U.S.A.">
        <title>Cloning of the cDNA encoding the urotensin II precursor in frog and human reveals intense expression of the urotensin II gene in motoneurons of the spinal cord.</title>
        <authorList>
            <person name="Coulouarn Y."/>
            <person name="Lihrmann I."/>
            <person name="Jegou S."/>
            <person name="Anouar Y."/>
            <person name="Tostivint H."/>
            <person name="Beauvillain J.-C."/>
            <person name="Conlon J.M."/>
            <person name="Bern H.A."/>
            <person name="Vaudry H."/>
        </authorList>
    </citation>
    <scope>NUCLEOTIDE SEQUENCE [MRNA]</scope>
    <source>
        <tissue>Brain</tissue>
    </source>
</reference>
<reference key="2">
    <citation type="journal article" date="1992" name="Biochem. Biophys. Res. Commun.">
        <title>Isolation and primary structure of urotensin II from the brain of a tetrapod, the frog Rana ridibunda.</title>
        <authorList>
            <person name="Conlon J.M."/>
            <person name="O'Harte F."/>
            <person name="Smith D.D."/>
            <person name="Tonon M.-C."/>
            <person name="Vaudry H."/>
        </authorList>
    </citation>
    <scope>PROTEIN SEQUENCE OF 115-127</scope>
    <source>
        <tissue>Brain</tissue>
    </source>
</reference>
<comment type="function">
    <text>Involved in smooth muscle stimulating and ion mobilizing activities. It has a suggested role as a corticotropin-releasing factor.</text>
</comment>
<comment type="subcellular location">
    <subcellularLocation>
        <location>Secreted</location>
    </subcellularLocation>
</comment>
<comment type="tissue specificity">
    <text>Central nervous system. Spinal cord.</text>
</comment>
<comment type="similarity">
    <text evidence="2">Belongs to the urotensin-2 family.</text>
</comment>
<accession>P33715</accession>
<accession>Q9PSX6</accession>
<gene>
    <name type="primary">UTS2</name>
</gene>
<proteinExistence type="evidence at protein level"/>
<feature type="signal peptide" evidence="1">
    <location>
        <begin position="1"/>
        <end position="16"/>
    </location>
</feature>
<feature type="propeptide" id="PRO_0000036344">
    <location>
        <begin position="17"/>
        <end position="111"/>
    </location>
</feature>
<feature type="peptide" id="PRO_0000036345" description="Urotensin-2">
    <location>
        <begin position="115"/>
        <end position="127"/>
    </location>
</feature>
<feature type="disulfide bond">
    <location>
        <begin position="121"/>
        <end position="126"/>
    </location>
</feature>
<dbReference type="EMBL" id="AF104117">
    <property type="protein sequence ID" value="AAD13069.1"/>
    <property type="molecule type" value="mRNA"/>
</dbReference>
<dbReference type="PIR" id="PQ0445">
    <property type="entry name" value="PQ0445"/>
</dbReference>
<dbReference type="GO" id="GO:0005576">
    <property type="term" value="C:extracellular region"/>
    <property type="evidence" value="ECO:0007669"/>
    <property type="project" value="UniProtKB-SubCell"/>
</dbReference>
<dbReference type="GO" id="GO:0005179">
    <property type="term" value="F:hormone activity"/>
    <property type="evidence" value="ECO:0007669"/>
    <property type="project" value="UniProtKB-KW"/>
</dbReference>
<dbReference type="GO" id="GO:0097746">
    <property type="term" value="P:blood vessel diameter maintenance"/>
    <property type="evidence" value="ECO:0007669"/>
    <property type="project" value="InterPro"/>
</dbReference>
<dbReference type="GO" id="GO:0008217">
    <property type="term" value="P:regulation of blood pressure"/>
    <property type="evidence" value="ECO:0007669"/>
    <property type="project" value="InterPro"/>
</dbReference>
<dbReference type="InterPro" id="IPR001483">
    <property type="entry name" value="Urotensin_II"/>
</dbReference>
<dbReference type="PANTHER" id="PTHR14447">
    <property type="entry name" value="UROTENSIN 2"/>
    <property type="match status" value="1"/>
</dbReference>
<dbReference type="PANTHER" id="PTHR14447:SF0">
    <property type="entry name" value="UROTENSIN-2"/>
    <property type="match status" value="1"/>
</dbReference>
<dbReference type="Pfam" id="PF02083">
    <property type="entry name" value="Urotensin_II"/>
    <property type="match status" value="1"/>
</dbReference>
<dbReference type="PROSITE" id="PS00984">
    <property type="entry name" value="UROTENSIN_II"/>
    <property type="match status" value="1"/>
</dbReference>
<sequence>MSKLFFCCLILAGSFCSFRSLPIIVPSKGSLRLSESALDFGDLKSWDDETRLLRNLPMFVDKEAERDAEDIFSKEGFGLDAYNMDDKEELFDKHPRISLLSRLQSKDRKQFKKRAGNLSECFWKYCV</sequence>
<name>UTS2_PELRI</name>
<protein>
    <recommendedName>
        <fullName>Urotensin-2</fullName>
    </recommendedName>
    <alternativeName>
        <fullName>Urotensin II</fullName>
        <shortName>U-II</shortName>
        <shortName>UII</shortName>
    </alternativeName>
</protein>